<name>LN28A_DANRE</name>
<reference key="1">
    <citation type="journal article" date="2013" name="Nature">
        <title>The zebrafish reference genome sequence and its relationship to the human genome.</title>
        <authorList>
            <person name="Howe K."/>
            <person name="Clark M.D."/>
            <person name="Torroja C.F."/>
            <person name="Torrance J."/>
            <person name="Berthelot C."/>
            <person name="Muffato M."/>
            <person name="Collins J.E."/>
            <person name="Humphray S."/>
            <person name="McLaren K."/>
            <person name="Matthews L."/>
            <person name="McLaren S."/>
            <person name="Sealy I."/>
            <person name="Caccamo M."/>
            <person name="Churcher C."/>
            <person name="Scott C."/>
            <person name="Barrett J.C."/>
            <person name="Koch R."/>
            <person name="Rauch G.J."/>
            <person name="White S."/>
            <person name="Chow W."/>
            <person name="Kilian B."/>
            <person name="Quintais L.T."/>
            <person name="Guerra-Assuncao J.A."/>
            <person name="Zhou Y."/>
            <person name="Gu Y."/>
            <person name="Yen J."/>
            <person name="Vogel J.H."/>
            <person name="Eyre T."/>
            <person name="Redmond S."/>
            <person name="Banerjee R."/>
            <person name="Chi J."/>
            <person name="Fu B."/>
            <person name="Langley E."/>
            <person name="Maguire S.F."/>
            <person name="Laird G.K."/>
            <person name="Lloyd D."/>
            <person name="Kenyon E."/>
            <person name="Donaldson S."/>
            <person name="Sehra H."/>
            <person name="Almeida-King J."/>
            <person name="Loveland J."/>
            <person name="Trevanion S."/>
            <person name="Jones M."/>
            <person name="Quail M."/>
            <person name="Willey D."/>
            <person name="Hunt A."/>
            <person name="Burton J."/>
            <person name="Sims S."/>
            <person name="McLay K."/>
            <person name="Plumb B."/>
            <person name="Davis J."/>
            <person name="Clee C."/>
            <person name="Oliver K."/>
            <person name="Clark R."/>
            <person name="Riddle C."/>
            <person name="Elliot D."/>
            <person name="Threadgold G."/>
            <person name="Harden G."/>
            <person name="Ware D."/>
            <person name="Begum S."/>
            <person name="Mortimore B."/>
            <person name="Kerry G."/>
            <person name="Heath P."/>
            <person name="Phillimore B."/>
            <person name="Tracey A."/>
            <person name="Corby N."/>
            <person name="Dunn M."/>
            <person name="Johnson C."/>
            <person name="Wood J."/>
            <person name="Clark S."/>
            <person name="Pelan S."/>
            <person name="Griffiths G."/>
            <person name="Smith M."/>
            <person name="Glithero R."/>
            <person name="Howden P."/>
            <person name="Barker N."/>
            <person name="Lloyd C."/>
            <person name="Stevens C."/>
            <person name="Harley J."/>
            <person name="Holt K."/>
            <person name="Panagiotidis G."/>
            <person name="Lovell J."/>
            <person name="Beasley H."/>
            <person name="Henderson C."/>
            <person name="Gordon D."/>
            <person name="Auger K."/>
            <person name="Wright D."/>
            <person name="Collins J."/>
            <person name="Raisen C."/>
            <person name="Dyer L."/>
            <person name="Leung K."/>
            <person name="Robertson L."/>
            <person name="Ambridge K."/>
            <person name="Leongamornlert D."/>
            <person name="McGuire S."/>
            <person name="Gilderthorp R."/>
            <person name="Griffiths C."/>
            <person name="Manthravadi D."/>
            <person name="Nichol S."/>
            <person name="Barker G."/>
            <person name="Whitehead S."/>
            <person name="Kay M."/>
            <person name="Brown J."/>
            <person name="Murnane C."/>
            <person name="Gray E."/>
            <person name="Humphries M."/>
            <person name="Sycamore N."/>
            <person name="Barker D."/>
            <person name="Saunders D."/>
            <person name="Wallis J."/>
            <person name="Babbage A."/>
            <person name="Hammond S."/>
            <person name="Mashreghi-Mohammadi M."/>
            <person name="Barr L."/>
            <person name="Martin S."/>
            <person name="Wray P."/>
            <person name="Ellington A."/>
            <person name="Matthews N."/>
            <person name="Ellwood M."/>
            <person name="Woodmansey R."/>
            <person name="Clark G."/>
            <person name="Cooper J."/>
            <person name="Tromans A."/>
            <person name="Grafham D."/>
            <person name="Skuce C."/>
            <person name="Pandian R."/>
            <person name="Andrews R."/>
            <person name="Harrison E."/>
            <person name="Kimberley A."/>
            <person name="Garnett J."/>
            <person name="Fosker N."/>
            <person name="Hall R."/>
            <person name="Garner P."/>
            <person name="Kelly D."/>
            <person name="Bird C."/>
            <person name="Palmer S."/>
            <person name="Gehring I."/>
            <person name="Berger A."/>
            <person name="Dooley C.M."/>
            <person name="Ersan-Urun Z."/>
            <person name="Eser C."/>
            <person name="Geiger H."/>
            <person name="Geisler M."/>
            <person name="Karotki L."/>
            <person name="Kirn A."/>
            <person name="Konantz J."/>
            <person name="Konantz M."/>
            <person name="Oberlander M."/>
            <person name="Rudolph-Geiger S."/>
            <person name="Teucke M."/>
            <person name="Lanz C."/>
            <person name="Raddatz G."/>
            <person name="Osoegawa K."/>
            <person name="Zhu B."/>
            <person name="Rapp A."/>
            <person name="Widaa S."/>
            <person name="Langford C."/>
            <person name="Yang F."/>
            <person name="Schuster S.C."/>
            <person name="Carter N.P."/>
            <person name="Harrow J."/>
            <person name="Ning Z."/>
            <person name="Herrero J."/>
            <person name="Searle S.M."/>
            <person name="Enright A."/>
            <person name="Geisler R."/>
            <person name="Plasterk R.H."/>
            <person name="Lee C."/>
            <person name="Westerfield M."/>
            <person name="de Jong P.J."/>
            <person name="Zon L.I."/>
            <person name="Postlethwait J.H."/>
            <person name="Nusslein-Volhard C."/>
            <person name="Hubbard T.J."/>
            <person name="Roest Crollius H."/>
            <person name="Rogers J."/>
            <person name="Stemple D.L."/>
        </authorList>
    </citation>
    <scope>NUCLEOTIDE SEQUENCE [LARGE SCALE GENOMIC DNA]</scope>
    <source>
        <strain>Tuebingen</strain>
    </source>
</reference>
<reference key="2">
    <citation type="submission" date="2003-01" db="EMBL/GenBank/DDBJ databases">
        <authorList>
            <consortium name="NIH - Zebrafish Gene Collection (ZGC) project"/>
        </authorList>
    </citation>
    <scope>NUCLEOTIDE SEQUENCE [LARGE SCALE MRNA]</scope>
    <source>
        <strain>AB</strain>
    </source>
</reference>
<reference key="3">
    <citation type="journal article" date="2008" name="J. Proteome Res.">
        <title>Online automated in vivo zebrafish phosphoproteomics: from large-scale analysis down to a single embryo.</title>
        <authorList>
            <person name="Lemeer S."/>
            <person name="Pinkse M.W.H."/>
            <person name="Mohammed S."/>
            <person name="van Breukelen B."/>
            <person name="den Hertog J."/>
            <person name="Slijper M."/>
            <person name="Heck A.J.R."/>
        </authorList>
    </citation>
    <scope>PHOSPHORYLATION [LARGE SCALE ANALYSIS] AT SER-174</scope>
    <scope>IDENTIFICATION BY MASS SPECTROMETRY</scope>
    <source>
        <tissue>Embryo</tissue>
    </source>
</reference>
<organism>
    <name type="scientific">Danio rerio</name>
    <name type="common">Zebrafish</name>
    <name type="synonym">Brachydanio rerio</name>
    <dbReference type="NCBI Taxonomy" id="7955"/>
    <lineage>
        <taxon>Eukaryota</taxon>
        <taxon>Metazoa</taxon>
        <taxon>Chordata</taxon>
        <taxon>Craniata</taxon>
        <taxon>Vertebrata</taxon>
        <taxon>Euteleostomi</taxon>
        <taxon>Actinopterygii</taxon>
        <taxon>Neopterygii</taxon>
        <taxon>Teleostei</taxon>
        <taxon>Ostariophysi</taxon>
        <taxon>Cypriniformes</taxon>
        <taxon>Danionidae</taxon>
        <taxon>Danioninae</taxon>
        <taxon>Danio</taxon>
    </lineage>
</organism>
<protein>
    <recommendedName>
        <fullName>Protein lin-28 homolog A</fullName>
        <shortName>Lin-28A</shortName>
    </recommendedName>
</protein>
<sequence>MPPANPHLNHTGGCTKTEEEEAASSEEDSGSFHGSGVCKWFNVRMGFGFLSMTHREGICLDSPVDVFVHQSKLHMEGFRSLKEGEAVEFTFKRSSKGLESLQVTGPGGAPCVGSEKKPKGTQKRRSKGDRCFNCGGPNHHAKECQLPPQPKKCHFCQSISHMVANCPIKAQQLSPGSQGKSTTSTGEEEDMSHTPLLPESTD</sequence>
<gene>
    <name type="primary">lin28a</name>
    <name type="synonym">lin28</name>
    <name type="ORF">si:ch211-232d9.4</name>
    <name type="ORF">zgc:55584</name>
</gene>
<dbReference type="EMBL" id="BX322664">
    <property type="protein sequence ID" value="CAK04625.1"/>
    <property type="molecule type" value="Genomic_DNA"/>
</dbReference>
<dbReference type="EMBL" id="BX322664">
    <property type="protein sequence ID" value="CAK04626.1"/>
    <property type="status" value="ALT_SEQ"/>
    <property type="molecule type" value="Genomic_DNA"/>
</dbReference>
<dbReference type="EMBL" id="BC044433">
    <property type="protein sequence ID" value="AAH44433.1"/>
    <property type="molecule type" value="mRNA"/>
</dbReference>
<dbReference type="RefSeq" id="NP_957385.1">
    <property type="nucleotide sequence ID" value="NM_201091.1"/>
</dbReference>
<dbReference type="SMR" id="Q803L0"/>
<dbReference type="FunCoup" id="Q803L0">
    <property type="interactions" value="247"/>
</dbReference>
<dbReference type="STRING" id="7955.ENSDARP00000089741"/>
<dbReference type="iPTMnet" id="Q803L0"/>
<dbReference type="PaxDb" id="7955-ENSDARP00000089741"/>
<dbReference type="Ensembl" id="ENSDART00000098970">
    <property type="protein sequence ID" value="ENSDARP00000089741"/>
    <property type="gene ID" value="ENSDARG00000016999"/>
</dbReference>
<dbReference type="GeneID" id="394066"/>
<dbReference type="KEGG" id="dre:394066"/>
<dbReference type="AGR" id="ZFIN:ZDB-GENE-040426-747"/>
<dbReference type="CTD" id="394066"/>
<dbReference type="ZFIN" id="ZDB-GENE-040426-747">
    <property type="gene designation" value="lin28ab"/>
</dbReference>
<dbReference type="eggNOG" id="KOG3070">
    <property type="taxonomic scope" value="Eukaryota"/>
</dbReference>
<dbReference type="InParanoid" id="Q803L0"/>
<dbReference type="OrthoDB" id="422005at2759"/>
<dbReference type="PhylomeDB" id="Q803L0"/>
<dbReference type="TreeFam" id="TF316240"/>
<dbReference type="PRO" id="PR:Q803L0"/>
<dbReference type="Proteomes" id="UP000000437">
    <property type="component" value="Chromosome 19"/>
</dbReference>
<dbReference type="Bgee" id="ENSDARG00000016999">
    <property type="expression patterns" value="Expressed in presomitic mesoderm and 38 other cell types or tissues"/>
</dbReference>
<dbReference type="ExpressionAtlas" id="Q803L0">
    <property type="expression patterns" value="baseline and differential"/>
</dbReference>
<dbReference type="GO" id="GO:0005737">
    <property type="term" value="C:cytoplasm"/>
    <property type="evidence" value="ECO:0000250"/>
    <property type="project" value="UniProtKB"/>
</dbReference>
<dbReference type="GO" id="GO:0010494">
    <property type="term" value="C:cytoplasmic stress granule"/>
    <property type="evidence" value="ECO:0000250"/>
    <property type="project" value="UniProtKB"/>
</dbReference>
<dbReference type="GO" id="GO:0005730">
    <property type="term" value="C:nucleolus"/>
    <property type="evidence" value="ECO:0007669"/>
    <property type="project" value="UniProtKB-SubCell"/>
</dbReference>
<dbReference type="GO" id="GO:0005634">
    <property type="term" value="C:nucleus"/>
    <property type="evidence" value="ECO:0000250"/>
    <property type="project" value="UniProtKB"/>
</dbReference>
<dbReference type="GO" id="GO:0000932">
    <property type="term" value="C:P-body"/>
    <property type="evidence" value="ECO:0000250"/>
    <property type="project" value="UniProtKB"/>
</dbReference>
<dbReference type="GO" id="GO:0005791">
    <property type="term" value="C:rough endoplasmic reticulum"/>
    <property type="evidence" value="ECO:0007669"/>
    <property type="project" value="UniProtKB-SubCell"/>
</dbReference>
<dbReference type="GO" id="GO:0003729">
    <property type="term" value="F:mRNA binding"/>
    <property type="evidence" value="ECO:0000250"/>
    <property type="project" value="UniProtKB"/>
</dbReference>
<dbReference type="GO" id="GO:0003723">
    <property type="term" value="F:RNA binding"/>
    <property type="evidence" value="ECO:0000250"/>
    <property type="project" value="UniProtKB"/>
</dbReference>
<dbReference type="GO" id="GO:0008270">
    <property type="term" value="F:zinc ion binding"/>
    <property type="evidence" value="ECO:0007669"/>
    <property type="project" value="UniProtKB-KW"/>
</dbReference>
<dbReference type="GO" id="GO:0043009">
    <property type="term" value="P:chordate embryonic development"/>
    <property type="evidence" value="ECO:0000315"/>
    <property type="project" value="ZFIN"/>
</dbReference>
<dbReference type="GO" id="GO:0010629">
    <property type="term" value="P:negative regulation of gene expression"/>
    <property type="evidence" value="ECO:0000315"/>
    <property type="project" value="ZFIN"/>
</dbReference>
<dbReference type="GO" id="GO:2000767">
    <property type="term" value="P:positive regulation of cytoplasmic translation"/>
    <property type="evidence" value="ECO:0000250"/>
    <property type="project" value="UniProtKB"/>
</dbReference>
<dbReference type="GO" id="GO:0031054">
    <property type="term" value="P:pre-miRNA processing"/>
    <property type="evidence" value="ECO:0000250"/>
    <property type="project" value="UniProtKB"/>
</dbReference>
<dbReference type="GO" id="GO:0031099">
    <property type="term" value="P:regeneration"/>
    <property type="evidence" value="ECO:0000315"/>
    <property type="project" value="ZFIN"/>
</dbReference>
<dbReference type="GO" id="GO:0019827">
    <property type="term" value="P:stem cell population maintenance"/>
    <property type="evidence" value="ECO:0000250"/>
    <property type="project" value="UniProtKB"/>
</dbReference>
<dbReference type="CDD" id="cd04458">
    <property type="entry name" value="CSP_CDS"/>
    <property type="match status" value="1"/>
</dbReference>
<dbReference type="FunFam" id="4.10.60.10:FF:000007">
    <property type="entry name" value="Protein lin-28 homolog A"/>
    <property type="match status" value="1"/>
</dbReference>
<dbReference type="FunFam" id="2.40.50.140:FF:000087">
    <property type="entry name" value="Protein lin-28 homolog B"/>
    <property type="match status" value="1"/>
</dbReference>
<dbReference type="Gene3D" id="2.40.50.140">
    <property type="entry name" value="Nucleic acid-binding proteins"/>
    <property type="match status" value="1"/>
</dbReference>
<dbReference type="Gene3D" id="4.10.60.10">
    <property type="entry name" value="Zinc finger, CCHC-type"/>
    <property type="match status" value="1"/>
</dbReference>
<dbReference type="InterPro" id="IPR011129">
    <property type="entry name" value="CSD"/>
</dbReference>
<dbReference type="InterPro" id="IPR002059">
    <property type="entry name" value="CSP_DNA-bd"/>
</dbReference>
<dbReference type="InterPro" id="IPR051373">
    <property type="entry name" value="Lin-28_RNA-binding"/>
</dbReference>
<dbReference type="InterPro" id="IPR054081">
    <property type="entry name" value="Lin-28A-like_Znf-CCHC_2"/>
</dbReference>
<dbReference type="InterPro" id="IPR012340">
    <property type="entry name" value="NA-bd_OB-fold"/>
</dbReference>
<dbReference type="InterPro" id="IPR001878">
    <property type="entry name" value="Znf_CCHC"/>
</dbReference>
<dbReference type="InterPro" id="IPR036875">
    <property type="entry name" value="Znf_CCHC_sf"/>
</dbReference>
<dbReference type="PANTHER" id="PTHR46109">
    <property type="entry name" value="PROTEIN LIN-28"/>
    <property type="match status" value="1"/>
</dbReference>
<dbReference type="PANTHER" id="PTHR46109:SF2">
    <property type="entry name" value="PROTEIN LIN-28 HOMOLOG A"/>
    <property type="match status" value="1"/>
</dbReference>
<dbReference type="Pfam" id="PF00313">
    <property type="entry name" value="CSD"/>
    <property type="match status" value="1"/>
</dbReference>
<dbReference type="Pfam" id="PF21890">
    <property type="entry name" value="Lin-28A-like_zf-CCHC_2"/>
    <property type="match status" value="1"/>
</dbReference>
<dbReference type="Pfam" id="PF00098">
    <property type="entry name" value="zf-CCHC"/>
    <property type="match status" value="1"/>
</dbReference>
<dbReference type="PRINTS" id="PR00050">
    <property type="entry name" value="COLDSHOCK"/>
</dbReference>
<dbReference type="SMART" id="SM00357">
    <property type="entry name" value="CSP"/>
    <property type="match status" value="1"/>
</dbReference>
<dbReference type="SMART" id="SM00343">
    <property type="entry name" value="ZnF_C2HC"/>
    <property type="match status" value="2"/>
</dbReference>
<dbReference type="SUPFAM" id="SSF50249">
    <property type="entry name" value="Nucleic acid-binding proteins"/>
    <property type="match status" value="1"/>
</dbReference>
<dbReference type="SUPFAM" id="SSF57756">
    <property type="entry name" value="Retrovirus zinc finger-like domains"/>
    <property type="match status" value="1"/>
</dbReference>
<dbReference type="PROSITE" id="PS51857">
    <property type="entry name" value="CSD_2"/>
    <property type="match status" value="1"/>
</dbReference>
<dbReference type="PROSITE" id="PS50158">
    <property type="entry name" value="ZF_CCHC"/>
    <property type="match status" value="1"/>
</dbReference>
<proteinExistence type="evidence at protein level"/>
<evidence type="ECO:0000250" key="1"/>
<evidence type="ECO:0000250" key="2">
    <source>
        <dbReference type="UniProtKB" id="Q8K3Y3"/>
    </source>
</evidence>
<evidence type="ECO:0000250" key="3">
    <source>
        <dbReference type="UniProtKB" id="Q9H9Z2"/>
    </source>
</evidence>
<evidence type="ECO:0000255" key="4">
    <source>
        <dbReference type="PROSITE-ProRule" id="PRU00047"/>
    </source>
</evidence>
<evidence type="ECO:0000256" key="5">
    <source>
        <dbReference type="SAM" id="MobiDB-lite"/>
    </source>
</evidence>
<evidence type="ECO:0000269" key="6">
    <source>
    </source>
</evidence>
<evidence type="ECO:0000305" key="7"/>
<keyword id="KW-0963">Cytoplasm</keyword>
<keyword id="KW-0256">Endoplasmic reticulum</keyword>
<keyword id="KW-0479">Metal-binding</keyword>
<keyword id="KW-0539">Nucleus</keyword>
<keyword id="KW-0597">Phosphoprotein</keyword>
<keyword id="KW-1185">Reference proteome</keyword>
<keyword id="KW-0677">Repeat</keyword>
<keyword id="KW-0694">RNA-binding</keyword>
<keyword id="KW-0943">RNA-mediated gene silencing</keyword>
<keyword id="KW-0862">Zinc</keyword>
<keyword id="KW-0863">Zinc-finger</keyword>
<feature type="chain" id="PRO_0000253790" description="Protein lin-28 homolog A">
    <location>
        <begin position="1"/>
        <end position="202"/>
    </location>
</feature>
<feature type="domain" description="CSD">
    <location>
        <begin position="33"/>
        <end position="106"/>
    </location>
</feature>
<feature type="zinc finger region" description="CCHC-type 1" evidence="4">
    <location>
        <begin position="129"/>
        <end position="146"/>
    </location>
</feature>
<feature type="zinc finger region" description="CCHC-type 2" evidence="4">
    <location>
        <begin position="151"/>
        <end position="168"/>
    </location>
</feature>
<feature type="region of interest" description="Disordered" evidence="5">
    <location>
        <begin position="1"/>
        <end position="33"/>
    </location>
</feature>
<feature type="region of interest" description="Disordered" evidence="5">
    <location>
        <begin position="100"/>
        <end position="128"/>
    </location>
</feature>
<feature type="region of interest" description="Flexible linker" evidence="1">
    <location>
        <begin position="107"/>
        <end position="130"/>
    </location>
</feature>
<feature type="region of interest" description="Disordered" evidence="5">
    <location>
        <begin position="170"/>
        <end position="202"/>
    </location>
</feature>
<feature type="compositionally biased region" description="Acidic residues" evidence="5">
    <location>
        <begin position="18"/>
        <end position="29"/>
    </location>
</feature>
<feature type="compositionally biased region" description="Polar residues" evidence="5">
    <location>
        <begin position="171"/>
        <end position="185"/>
    </location>
</feature>
<feature type="binding site" evidence="1">
    <location>
        <position position="131"/>
    </location>
    <ligand>
        <name>Zn(2+)</name>
        <dbReference type="ChEBI" id="CHEBI:29105"/>
        <label>1</label>
    </ligand>
</feature>
<feature type="binding site" evidence="1">
    <location>
        <position position="134"/>
    </location>
    <ligand>
        <name>Zn(2+)</name>
        <dbReference type="ChEBI" id="CHEBI:29105"/>
        <label>1</label>
    </ligand>
</feature>
<feature type="binding site" evidence="1">
    <location>
        <position position="139"/>
    </location>
    <ligand>
        <name>Zn(2+)</name>
        <dbReference type="ChEBI" id="CHEBI:29105"/>
        <label>1</label>
    </ligand>
</feature>
<feature type="binding site" evidence="1">
    <location>
        <position position="144"/>
    </location>
    <ligand>
        <name>Zn(2+)</name>
        <dbReference type="ChEBI" id="CHEBI:29105"/>
        <label>1</label>
    </ligand>
</feature>
<feature type="binding site" evidence="1">
    <location>
        <position position="153"/>
    </location>
    <ligand>
        <name>Zn(2+)</name>
        <dbReference type="ChEBI" id="CHEBI:29105"/>
        <label>2</label>
    </ligand>
</feature>
<feature type="binding site" evidence="1">
    <location>
        <position position="156"/>
    </location>
    <ligand>
        <name>Zn(2+)</name>
        <dbReference type="ChEBI" id="CHEBI:29105"/>
        <label>2</label>
    </ligand>
</feature>
<feature type="binding site" evidence="1">
    <location>
        <position position="161"/>
    </location>
    <ligand>
        <name>Zn(2+)</name>
        <dbReference type="ChEBI" id="CHEBI:29105"/>
        <label>2</label>
    </ligand>
</feature>
<feature type="binding site" evidence="1">
    <location>
        <position position="166"/>
    </location>
    <ligand>
        <name>Zn(2+)</name>
        <dbReference type="ChEBI" id="CHEBI:29105"/>
        <label>2</label>
    </ligand>
</feature>
<feature type="modified residue" description="Phosphoserine" evidence="6">
    <location>
        <position position="174"/>
    </location>
</feature>
<comment type="function">
    <text evidence="2 3">RNA-binding protein that inhibits processing of pre-let-7 miRNAs and regulates translation of mRNAs that control developmental timing, pluripotency and metabolism. Seems to recognize a common structural G-quartet (G4) feature in its miRNA and mRNA targets (By similarity). 'Translational enhancer' that drives specific mRNAs to polysomes and increases the efficiency of protein synthesis. Its association with the translational machinery and target mRNAs results in an increased number of initiation events per molecule of mRNA and, indirectly, in mRNA stabilization. Suppressor of microRNA (miRNA) biogenesis, including that of let-7. Binds specific target miRNA precursors (pre-miRNAs), recognizing an 5'-GGAG-3' motif found in their terminal loop, and recruits uridylyltransferase. This results in the terminal uridylation of target pre-miRNAs. Uridylated pre-miRNAs fail to be processed by Dicer and undergo degradation (By similarity). Localized to the periendoplasmic reticulum area, binds to a large number of spliced mRNAs and inhibits the translation of mRNAs destined for the ER, reducing the synthesis of transmembrane proteins, ER or Golgi lumen proteins, and secretory proteins. Binds to and enhances the translation of mRNAs for several metabolic enzymes, increasing glycolysis and oxidative phosphorylation. Which, with the let-7 repression may enhance tissue repair in adult tissue (By similarity).</text>
</comment>
<comment type="subunit">
    <text evidence="2">Monomer.</text>
</comment>
<comment type="subcellular location">
    <subcellularLocation>
        <location evidence="2">Cytoplasm</location>
    </subcellularLocation>
    <subcellularLocation>
        <location evidence="2">Rough endoplasmic reticulum</location>
    </subcellularLocation>
    <subcellularLocation>
        <location evidence="3">Cytoplasm</location>
        <location evidence="3">P-body</location>
    </subcellularLocation>
    <subcellularLocation>
        <location evidence="2">Cytoplasm</location>
        <location evidence="2">Stress granule</location>
    </subcellularLocation>
    <subcellularLocation>
        <location evidence="2">Nucleus</location>
        <location evidence="2">Nucleolus</location>
    </subcellularLocation>
    <text evidence="2">Predominantly cytoplasmic. In the cytoplasm, localizes to peri-endoplasmic reticulum regions and may be bound to the cytosolic surface of rough endoplasmic reticulum (ER) on which ER-associated mRNAs are translated. Shuttle from the nucleus to the cytoplasm requires RNA-binding.</text>
</comment>
<comment type="domain">
    <text evidence="1">The CCHC zinc fingers interact with the GGAG motif at the 3' end of let-7 miRNAs precursors, more generally they bind the 5'-NGNNG-3' consensus motif with micromolar affinity. The CSD domain recognizes the loop at the 5' end. The flexible linker allows accommodating variable sequences and lengths among let-7 family members (By similarity).</text>
</comment>
<comment type="similarity">
    <text evidence="7">Belongs to the lin-28 family.</text>
</comment>
<comment type="sequence caution" evidence="7">
    <conflict type="erroneous gene model prediction">
        <sequence resource="EMBL-CDS" id="CAK04626"/>
    </conflict>
</comment>
<accession>Q803L0</accession>
<accession>Q1LXL3</accession>